<comment type="function">
    <text evidence="1">Catalyzes the transamination of N(2)-succinylornithine and alpha-ketoglutarate into N(2)-succinylglutamate semialdehyde and glutamate. Can also act as an acetylornithine aminotransferase.</text>
</comment>
<comment type="catalytic activity">
    <reaction evidence="1">
        <text>N(2)-succinyl-L-ornithine + 2-oxoglutarate = N-succinyl-L-glutamate 5-semialdehyde + L-glutamate</text>
        <dbReference type="Rhea" id="RHEA:16953"/>
        <dbReference type="ChEBI" id="CHEBI:16810"/>
        <dbReference type="ChEBI" id="CHEBI:29985"/>
        <dbReference type="ChEBI" id="CHEBI:58514"/>
        <dbReference type="ChEBI" id="CHEBI:58520"/>
        <dbReference type="EC" id="2.6.1.81"/>
    </reaction>
</comment>
<comment type="cofactor">
    <cofactor evidence="1">
        <name>pyridoxal 5'-phosphate</name>
        <dbReference type="ChEBI" id="CHEBI:597326"/>
    </cofactor>
</comment>
<comment type="pathway">
    <text evidence="1">Amino-acid degradation; L-arginine degradation via AST pathway; L-glutamate and succinate from L-arginine: step 3/5.</text>
</comment>
<comment type="similarity">
    <text evidence="1">Belongs to the class-III pyridoxal-phosphate-dependent aminotransferase family. AstC subfamily.</text>
</comment>
<reference key="1">
    <citation type="journal article" date="2005" name="Nucleic Acids Res.">
        <title>Genome dynamics and diversity of Shigella species, the etiologic agents of bacillary dysentery.</title>
        <authorList>
            <person name="Yang F."/>
            <person name="Yang J."/>
            <person name="Zhang X."/>
            <person name="Chen L."/>
            <person name="Jiang Y."/>
            <person name="Yan Y."/>
            <person name="Tang X."/>
            <person name="Wang J."/>
            <person name="Xiong Z."/>
            <person name="Dong J."/>
            <person name="Xue Y."/>
            <person name="Zhu Y."/>
            <person name="Xu X."/>
            <person name="Sun L."/>
            <person name="Chen S."/>
            <person name="Nie H."/>
            <person name="Peng J."/>
            <person name="Xu J."/>
            <person name="Wang Y."/>
            <person name="Yuan Z."/>
            <person name="Wen Y."/>
            <person name="Yao Z."/>
            <person name="Shen Y."/>
            <person name="Qiang B."/>
            <person name="Hou Y."/>
            <person name="Yu J."/>
            <person name="Jin Q."/>
        </authorList>
    </citation>
    <scope>NUCLEOTIDE SEQUENCE [LARGE SCALE GENOMIC DNA]</scope>
    <source>
        <strain>Ss046</strain>
    </source>
</reference>
<evidence type="ECO:0000255" key="1">
    <source>
        <dbReference type="HAMAP-Rule" id="MF_01173"/>
    </source>
</evidence>
<feature type="chain" id="PRO_0000262444" description="Succinylornithine transaminase">
    <location>
        <begin position="1"/>
        <end position="406"/>
    </location>
</feature>
<feature type="modified residue" description="N6-(pyridoxal phosphate)lysine" evidence="1">
    <location>
        <position position="252"/>
    </location>
</feature>
<sequence>MSQPITRENFDEWMIPVYAPAPFIPVRGEGSRLWDQQGKEYIDFAGGIAVNALGHAHPELREALNEQASKFWHTGNGYTNEPVLRLAKKLIDATFADRVFFCNSGAEANEAALKLARKFAHDRYGSHKSGIVAFKNAFHGRTLFTVSAGGQPAYSQDFAPLPPDIRHAAYNDINSASALIDDATCAVIVEPIQGEGGVVPASNAFLQGLRELCDRHNALLIFDEVQTGVGRTGELYAYMHYGVTPDLLTTAKALGGGFPVGALLTTEECASVMTVGTHGTTYGGNPLASAVAGKVLELINTPEMLNGVKQRHDWFVERLNTINHRYGLFSEVRGLGLLIGCVLNADYAGQAKQISQEAAKAGVMVLIAGGNVVRFAPALNVSEEEVTTGLDRFAAACEHFVSRGSS</sequence>
<gene>
    <name evidence="1" type="primary">astC</name>
    <name evidence="1" type="synonym">argM</name>
    <name type="ordered locus">SSON_1409</name>
</gene>
<dbReference type="EC" id="2.6.1.81" evidence="1"/>
<dbReference type="EMBL" id="CP000038">
    <property type="protein sequence ID" value="AAZ88117.1"/>
    <property type="molecule type" value="Genomic_DNA"/>
</dbReference>
<dbReference type="RefSeq" id="WP_000081997.1">
    <property type="nucleotide sequence ID" value="NC_007384.1"/>
</dbReference>
<dbReference type="SMR" id="Q3Z295"/>
<dbReference type="GeneID" id="93775962"/>
<dbReference type="KEGG" id="ssn:SSON_1409"/>
<dbReference type="HOGENOM" id="CLU_016922_10_1_6"/>
<dbReference type="UniPathway" id="UPA00185">
    <property type="reaction ID" value="UER00281"/>
</dbReference>
<dbReference type="Proteomes" id="UP000002529">
    <property type="component" value="Chromosome"/>
</dbReference>
<dbReference type="GO" id="GO:0042802">
    <property type="term" value="F:identical protein binding"/>
    <property type="evidence" value="ECO:0007669"/>
    <property type="project" value="TreeGrafter"/>
</dbReference>
<dbReference type="GO" id="GO:0030170">
    <property type="term" value="F:pyridoxal phosphate binding"/>
    <property type="evidence" value="ECO:0007669"/>
    <property type="project" value="UniProtKB-UniRule"/>
</dbReference>
<dbReference type="GO" id="GO:0043825">
    <property type="term" value="F:succinylornithine transaminase activity"/>
    <property type="evidence" value="ECO:0007669"/>
    <property type="project" value="UniProtKB-EC"/>
</dbReference>
<dbReference type="GO" id="GO:1901607">
    <property type="term" value="P:alpha-amino acid biosynthetic process"/>
    <property type="evidence" value="ECO:0007669"/>
    <property type="project" value="UniProtKB-ARBA"/>
</dbReference>
<dbReference type="GO" id="GO:0019544">
    <property type="term" value="P:arginine catabolic process to glutamate"/>
    <property type="evidence" value="ECO:0007669"/>
    <property type="project" value="UniProtKB-UniRule"/>
</dbReference>
<dbReference type="GO" id="GO:0019545">
    <property type="term" value="P:arginine catabolic process to succinate"/>
    <property type="evidence" value="ECO:0007669"/>
    <property type="project" value="UniProtKB-UniRule"/>
</dbReference>
<dbReference type="GO" id="GO:0006593">
    <property type="term" value="P:ornithine catabolic process"/>
    <property type="evidence" value="ECO:0007669"/>
    <property type="project" value="InterPro"/>
</dbReference>
<dbReference type="CDD" id="cd00610">
    <property type="entry name" value="OAT_like"/>
    <property type="match status" value="1"/>
</dbReference>
<dbReference type="FunFam" id="3.40.640.10:FF:000004">
    <property type="entry name" value="Acetylornithine aminotransferase"/>
    <property type="match status" value="1"/>
</dbReference>
<dbReference type="FunFam" id="3.90.1150.10:FF:000009">
    <property type="entry name" value="Succinylornithine transaminase"/>
    <property type="match status" value="1"/>
</dbReference>
<dbReference type="Gene3D" id="3.90.1150.10">
    <property type="entry name" value="Aspartate Aminotransferase, domain 1"/>
    <property type="match status" value="1"/>
</dbReference>
<dbReference type="Gene3D" id="3.40.640.10">
    <property type="entry name" value="Type I PLP-dependent aspartate aminotransferase-like (Major domain)"/>
    <property type="match status" value="1"/>
</dbReference>
<dbReference type="HAMAP" id="MF_01107">
    <property type="entry name" value="ArgD_aminotrans_3"/>
    <property type="match status" value="1"/>
</dbReference>
<dbReference type="HAMAP" id="MF_01173">
    <property type="entry name" value="AstC_aminotrans_3"/>
    <property type="match status" value="1"/>
</dbReference>
<dbReference type="InterPro" id="IPR017652">
    <property type="entry name" value="Ac/SucOrn_transaminase_bac"/>
</dbReference>
<dbReference type="InterPro" id="IPR004636">
    <property type="entry name" value="AcOrn/SuccOrn_fam"/>
</dbReference>
<dbReference type="InterPro" id="IPR005814">
    <property type="entry name" value="Aminotrans_3"/>
</dbReference>
<dbReference type="InterPro" id="IPR049704">
    <property type="entry name" value="Aminotrans_3_PPA_site"/>
</dbReference>
<dbReference type="InterPro" id="IPR050103">
    <property type="entry name" value="Class-III_PLP-dep_AT"/>
</dbReference>
<dbReference type="InterPro" id="IPR015424">
    <property type="entry name" value="PyrdxlP-dep_Trfase"/>
</dbReference>
<dbReference type="InterPro" id="IPR015421">
    <property type="entry name" value="PyrdxlP-dep_Trfase_major"/>
</dbReference>
<dbReference type="InterPro" id="IPR015422">
    <property type="entry name" value="PyrdxlP-dep_Trfase_small"/>
</dbReference>
<dbReference type="InterPro" id="IPR026330">
    <property type="entry name" value="SOAT"/>
</dbReference>
<dbReference type="NCBIfam" id="TIGR03246">
    <property type="entry name" value="arg_catab_astC"/>
    <property type="match status" value="1"/>
</dbReference>
<dbReference type="NCBIfam" id="TIGR00707">
    <property type="entry name" value="argD"/>
    <property type="match status" value="1"/>
</dbReference>
<dbReference type="NCBIfam" id="NF002325">
    <property type="entry name" value="PRK01278.1"/>
    <property type="match status" value="1"/>
</dbReference>
<dbReference type="NCBIfam" id="NF003468">
    <property type="entry name" value="PRK05093.1"/>
    <property type="match status" value="1"/>
</dbReference>
<dbReference type="NCBIfam" id="NF009047">
    <property type="entry name" value="PRK12381.1"/>
    <property type="match status" value="1"/>
</dbReference>
<dbReference type="PANTHER" id="PTHR11986">
    <property type="entry name" value="AMINOTRANSFERASE CLASS III"/>
    <property type="match status" value="1"/>
</dbReference>
<dbReference type="PANTHER" id="PTHR11986:SF113">
    <property type="entry name" value="SUCCINYLORNITHINE TRANSAMINASE"/>
    <property type="match status" value="1"/>
</dbReference>
<dbReference type="Pfam" id="PF00202">
    <property type="entry name" value="Aminotran_3"/>
    <property type="match status" value="1"/>
</dbReference>
<dbReference type="PIRSF" id="PIRSF000521">
    <property type="entry name" value="Transaminase_4ab_Lys_Orn"/>
    <property type="match status" value="1"/>
</dbReference>
<dbReference type="SUPFAM" id="SSF53383">
    <property type="entry name" value="PLP-dependent transferases"/>
    <property type="match status" value="1"/>
</dbReference>
<dbReference type="PROSITE" id="PS00600">
    <property type="entry name" value="AA_TRANSFER_CLASS_3"/>
    <property type="match status" value="1"/>
</dbReference>
<proteinExistence type="inferred from homology"/>
<organism>
    <name type="scientific">Shigella sonnei (strain Ss046)</name>
    <dbReference type="NCBI Taxonomy" id="300269"/>
    <lineage>
        <taxon>Bacteria</taxon>
        <taxon>Pseudomonadati</taxon>
        <taxon>Pseudomonadota</taxon>
        <taxon>Gammaproteobacteria</taxon>
        <taxon>Enterobacterales</taxon>
        <taxon>Enterobacteriaceae</taxon>
        <taxon>Shigella</taxon>
    </lineage>
</organism>
<accession>Q3Z295</accession>
<protein>
    <recommendedName>
        <fullName evidence="1">Succinylornithine transaminase</fullName>
        <shortName>SOAT</shortName>
        <ecNumber evidence="1">2.6.1.81</ecNumber>
    </recommendedName>
    <alternativeName>
        <fullName evidence="1">Succinylornithine aminotransferase</fullName>
    </alternativeName>
</protein>
<keyword id="KW-0032">Aminotransferase</keyword>
<keyword id="KW-0056">Arginine metabolism</keyword>
<keyword id="KW-0663">Pyridoxal phosphate</keyword>
<keyword id="KW-1185">Reference proteome</keyword>
<keyword id="KW-0808">Transferase</keyword>
<name>ASTC_SHISS</name>